<proteinExistence type="inferred from homology"/>
<gene>
    <name evidence="1" type="primary">rppH</name>
    <name evidence="1" type="synonym">nudH</name>
    <name type="ordered locus">SF2840</name>
    <name type="ordered locus">S3038</name>
</gene>
<name>RPPH_SHIFL</name>
<keyword id="KW-0378">Hydrolase</keyword>
<keyword id="KW-1185">Reference proteome</keyword>
<protein>
    <recommendedName>
        <fullName evidence="1">RNA pyrophosphohydrolase</fullName>
        <ecNumber evidence="1">3.6.1.-</ecNumber>
    </recommendedName>
    <alternativeName>
        <fullName evidence="1">(Di)nucleoside polyphosphate hydrolase</fullName>
    </alternativeName>
</protein>
<sequence>MIDDDGYRPNVGIVICNRQGQVMWARRFGQHSWQFPQGGINPGESAEQAMYRELFEEVGLSRKDVRILASTRNWLRYKLPKRLVRWDTKPVCIGQKQKWFLLQLVSGDAEINMQTSSTPEFDGWRWVSYWYPVRQVVSFKRDVYRRVMKEFASVVMSLQENTPKPQNASAYRRKRG</sequence>
<comment type="function">
    <text evidence="1">Accelerates the degradation of transcripts by removing pyrophosphate from the 5'-end of triphosphorylated RNA, leading to a more labile monophosphorylated state that can stimulate subsequent ribonuclease cleavage.</text>
</comment>
<comment type="cofactor">
    <cofactor evidence="1">
        <name>a divalent metal cation</name>
        <dbReference type="ChEBI" id="CHEBI:60240"/>
    </cofactor>
</comment>
<comment type="similarity">
    <text evidence="1">Belongs to the Nudix hydrolase family. RppH subfamily.</text>
</comment>
<evidence type="ECO:0000255" key="1">
    <source>
        <dbReference type="HAMAP-Rule" id="MF_00298"/>
    </source>
</evidence>
<accession>P0A779</accession>
<accession>Q46930</accession>
<feature type="chain" id="PRO_0000057029" description="RNA pyrophosphohydrolase">
    <location>
        <begin position="1"/>
        <end position="176"/>
    </location>
</feature>
<feature type="domain" description="Nudix hydrolase" evidence="1">
    <location>
        <begin position="6"/>
        <end position="149"/>
    </location>
</feature>
<feature type="short sequence motif" description="Nudix box">
    <location>
        <begin position="38"/>
        <end position="59"/>
    </location>
</feature>
<organism>
    <name type="scientific">Shigella flexneri</name>
    <dbReference type="NCBI Taxonomy" id="623"/>
    <lineage>
        <taxon>Bacteria</taxon>
        <taxon>Pseudomonadati</taxon>
        <taxon>Pseudomonadota</taxon>
        <taxon>Gammaproteobacteria</taxon>
        <taxon>Enterobacterales</taxon>
        <taxon>Enterobacteriaceae</taxon>
        <taxon>Shigella</taxon>
    </lineage>
</organism>
<dbReference type="EC" id="3.6.1.-" evidence="1"/>
<dbReference type="EMBL" id="AE005674">
    <property type="protein sequence ID" value="AAN44326.1"/>
    <property type="molecule type" value="Genomic_DNA"/>
</dbReference>
<dbReference type="EMBL" id="AE014073">
    <property type="protein sequence ID" value="AAP18152.1"/>
    <property type="molecule type" value="Genomic_DNA"/>
</dbReference>
<dbReference type="RefSeq" id="WP_000564489.1">
    <property type="nucleotide sequence ID" value="NZ_WPGW01000008.1"/>
</dbReference>
<dbReference type="SMR" id="P0A779"/>
<dbReference type="STRING" id="198214.SF2840"/>
<dbReference type="PaxDb" id="198214-SF2840"/>
<dbReference type="GeneID" id="75203778"/>
<dbReference type="KEGG" id="sfl:SF2840"/>
<dbReference type="KEGG" id="sfx:S3038"/>
<dbReference type="PATRIC" id="fig|198214.7.peg.3380"/>
<dbReference type="HOGENOM" id="CLU_087195_3_2_6"/>
<dbReference type="Proteomes" id="UP000001006">
    <property type="component" value="Chromosome"/>
</dbReference>
<dbReference type="Proteomes" id="UP000002673">
    <property type="component" value="Chromosome"/>
</dbReference>
<dbReference type="GO" id="GO:0005737">
    <property type="term" value="C:cytoplasm"/>
    <property type="evidence" value="ECO:0007669"/>
    <property type="project" value="TreeGrafter"/>
</dbReference>
<dbReference type="GO" id="GO:0034353">
    <property type="term" value="F:mRNA 5'-diphosphatase activity"/>
    <property type="evidence" value="ECO:0007669"/>
    <property type="project" value="TreeGrafter"/>
</dbReference>
<dbReference type="GO" id="GO:0006402">
    <property type="term" value="P:mRNA catabolic process"/>
    <property type="evidence" value="ECO:0007669"/>
    <property type="project" value="TreeGrafter"/>
</dbReference>
<dbReference type="CDD" id="cd03671">
    <property type="entry name" value="NUDIX_Ap4A_hydrolase_plant_like"/>
    <property type="match status" value="1"/>
</dbReference>
<dbReference type="FunFam" id="3.90.79.10:FF:000001">
    <property type="entry name" value="RNA pyrophosphohydrolase"/>
    <property type="match status" value="1"/>
</dbReference>
<dbReference type="Gene3D" id="3.90.79.10">
    <property type="entry name" value="Nucleoside Triphosphate Pyrophosphohydrolase"/>
    <property type="match status" value="1"/>
</dbReference>
<dbReference type="HAMAP" id="MF_00298">
    <property type="entry name" value="Nudix_RppH"/>
    <property type="match status" value="1"/>
</dbReference>
<dbReference type="InterPro" id="IPR020476">
    <property type="entry name" value="Nudix_hydrolase"/>
</dbReference>
<dbReference type="InterPro" id="IPR015797">
    <property type="entry name" value="NUDIX_hydrolase-like_dom_sf"/>
</dbReference>
<dbReference type="InterPro" id="IPR020084">
    <property type="entry name" value="NUDIX_hydrolase_CS"/>
</dbReference>
<dbReference type="InterPro" id="IPR000086">
    <property type="entry name" value="NUDIX_hydrolase_dom"/>
</dbReference>
<dbReference type="InterPro" id="IPR022927">
    <property type="entry name" value="RppH"/>
</dbReference>
<dbReference type="NCBIfam" id="NF001934">
    <property type="entry name" value="PRK00714.1-1"/>
    <property type="match status" value="1"/>
</dbReference>
<dbReference type="NCBIfam" id="NF001937">
    <property type="entry name" value="PRK00714.1-4"/>
    <property type="match status" value="1"/>
</dbReference>
<dbReference type="NCBIfam" id="NF001938">
    <property type="entry name" value="PRK00714.1-5"/>
    <property type="match status" value="1"/>
</dbReference>
<dbReference type="PANTHER" id="PTHR23114">
    <property type="entry name" value="M7GPPPN-MRNA HYDROLASE"/>
    <property type="match status" value="1"/>
</dbReference>
<dbReference type="PANTHER" id="PTHR23114:SF17">
    <property type="entry name" value="M7GPPPN-MRNA HYDROLASE"/>
    <property type="match status" value="1"/>
</dbReference>
<dbReference type="Pfam" id="PF00293">
    <property type="entry name" value="NUDIX"/>
    <property type="match status" value="1"/>
</dbReference>
<dbReference type="PRINTS" id="PR00502">
    <property type="entry name" value="NUDIXFAMILY"/>
</dbReference>
<dbReference type="SUPFAM" id="SSF55811">
    <property type="entry name" value="Nudix"/>
    <property type="match status" value="1"/>
</dbReference>
<dbReference type="PROSITE" id="PS51462">
    <property type="entry name" value="NUDIX"/>
    <property type="match status" value="1"/>
</dbReference>
<dbReference type="PROSITE" id="PS00893">
    <property type="entry name" value="NUDIX_BOX"/>
    <property type="match status" value="1"/>
</dbReference>
<reference key="1">
    <citation type="journal article" date="2002" name="Nucleic Acids Res.">
        <title>Genome sequence of Shigella flexneri 2a: insights into pathogenicity through comparison with genomes of Escherichia coli K12 and O157.</title>
        <authorList>
            <person name="Jin Q."/>
            <person name="Yuan Z."/>
            <person name="Xu J."/>
            <person name="Wang Y."/>
            <person name="Shen Y."/>
            <person name="Lu W."/>
            <person name="Wang J."/>
            <person name="Liu H."/>
            <person name="Yang J."/>
            <person name="Yang F."/>
            <person name="Zhang X."/>
            <person name="Zhang J."/>
            <person name="Yang G."/>
            <person name="Wu H."/>
            <person name="Qu D."/>
            <person name="Dong J."/>
            <person name="Sun L."/>
            <person name="Xue Y."/>
            <person name="Zhao A."/>
            <person name="Gao Y."/>
            <person name="Zhu J."/>
            <person name="Kan B."/>
            <person name="Ding K."/>
            <person name="Chen S."/>
            <person name="Cheng H."/>
            <person name="Yao Z."/>
            <person name="He B."/>
            <person name="Chen R."/>
            <person name="Ma D."/>
            <person name="Qiang B."/>
            <person name="Wen Y."/>
            <person name="Hou Y."/>
            <person name="Yu J."/>
        </authorList>
    </citation>
    <scope>NUCLEOTIDE SEQUENCE [LARGE SCALE GENOMIC DNA]</scope>
    <source>
        <strain>301 / Serotype 2a</strain>
    </source>
</reference>
<reference key="2">
    <citation type="journal article" date="2003" name="Infect. Immun.">
        <title>Complete genome sequence and comparative genomics of Shigella flexneri serotype 2a strain 2457T.</title>
        <authorList>
            <person name="Wei J."/>
            <person name="Goldberg M.B."/>
            <person name="Burland V."/>
            <person name="Venkatesan M.M."/>
            <person name="Deng W."/>
            <person name="Fournier G."/>
            <person name="Mayhew G.F."/>
            <person name="Plunkett G. III"/>
            <person name="Rose D.J."/>
            <person name="Darling A."/>
            <person name="Mau B."/>
            <person name="Perna N.T."/>
            <person name="Payne S.M."/>
            <person name="Runyen-Janecky L.J."/>
            <person name="Zhou S."/>
            <person name="Schwartz D.C."/>
            <person name="Blattner F.R."/>
        </authorList>
    </citation>
    <scope>NUCLEOTIDE SEQUENCE [LARGE SCALE GENOMIC DNA]</scope>
    <source>
        <strain>ATCC 700930 / 2457T / Serotype 2a</strain>
    </source>
</reference>